<accession>H2E7Q7</accession>
<accession>A0A067SWU5</accession>
<evidence type="ECO:0000250" key="1">
    <source>
        <dbReference type="UniProtKB" id="P48147"/>
    </source>
</evidence>
<evidence type="ECO:0000255" key="2">
    <source>
        <dbReference type="PROSITE-ProRule" id="PRU10084"/>
    </source>
</evidence>
<evidence type="ECO:0000303" key="3">
    <source>
    </source>
</evidence>
<evidence type="ECO:0000305" key="4"/>
<evidence type="ECO:0000305" key="5">
    <source>
    </source>
</evidence>
<proteinExistence type="evidence at transcript level"/>
<sequence length="738" mass="83321">MARTPWLPNAYPPARRSDHVDIYKSALRGDVRVQDPYQWLEEYTDETDKWTTAQEVFTRTYLDKNPDLPRLEKAFQACNDYPKSYAPYLHDDNRWYWYYNSGLEPQTALYRSKDSSLPDLSTADGSGGDLFFDPNALSNDGTAALSTYAFSDCGKYFAYGISFSGSDFVTIYVRLTDSPLTKDVDAKNDKGRLPEEIKFVKFSSIGWTPDSKGFFYQRYPDTSTVTQENGPIATEGDLDAMVYYHRLGTPQSEDTLIYQDKEHRDWMFSIDVTDDGNYLLLYILKDSSRQNLLWIAAFDPANLGPNIKWQKVFDEYHSEYEIITNKGSLFYVRTNESAPQYRVITVDIAKGNEINELIPETDAYLSSITSVNKGYFALVYKRNVKDEVYVYSHAGNQLARLAEDFVGAAHVSGREKHSSFFVELNGFTSPGTIGRYKFTDPEEQRWSIYRTTKLNGLNTEDFEASQVWYESKDGTSIPMFIVRHKSTKFDGTAPVIQYGYGGFSISIDPFFSATILTFLQKYGVVFALPNIRGGGEFGEDWHLAGCREKKGNCFDDFIAATQYLVKNKYAAPDKVTINGGSNGGLLVSACVNRAPEGTFGCAVADVGVHDLLKFHKFTIGKAWTSDYGNPDDPNDFDFIFPISPLQNIPKDKVFPPMLLLTADHDDRVVPMHSFKLAAELQYSLPHNPNPLLIRIDKKAGHGAGKSTQQKIKESADKWGFVAQSLGLVWKDSTEQPNL</sequence>
<protein>
    <recommendedName>
        <fullName evidence="3">Prolyl oligopeptidase A</fullName>
        <ecNumber evidence="5">3.4.21.26</ecNumber>
    </recommendedName>
</protein>
<organism>
    <name type="scientific">Galerina marginata (strain CBS 339.88)</name>
    <dbReference type="NCBI Taxonomy" id="685588"/>
    <lineage>
        <taxon>Eukaryota</taxon>
        <taxon>Fungi</taxon>
        <taxon>Dikarya</taxon>
        <taxon>Basidiomycota</taxon>
        <taxon>Agaricomycotina</taxon>
        <taxon>Agaricomycetes</taxon>
        <taxon>Agaricomycetidae</taxon>
        <taxon>Agaricales</taxon>
        <taxon>Agaricineae</taxon>
        <taxon>Strophariaceae</taxon>
        <taxon>Galerina</taxon>
    </lineage>
</organism>
<dbReference type="EC" id="3.4.21.26" evidence="5"/>
<dbReference type="EMBL" id="JN827313">
    <property type="protein sequence ID" value="AEX26937.2"/>
    <property type="molecule type" value="mRNA"/>
</dbReference>
<dbReference type="EMBL" id="KL142383">
    <property type="protein sequence ID" value="KDR74502.1"/>
    <property type="molecule type" value="Genomic_DNA"/>
</dbReference>
<dbReference type="SMR" id="H2E7Q7"/>
<dbReference type="STRING" id="685588.H2E7Q7"/>
<dbReference type="ESTHER" id="galm3-popa">
    <property type="family name" value="S9N_PPCE_Peptidase_S9"/>
</dbReference>
<dbReference type="OrthoDB" id="248387at2759"/>
<dbReference type="Proteomes" id="UP000027222">
    <property type="component" value="Unassembled WGS sequence"/>
</dbReference>
<dbReference type="GO" id="GO:0005829">
    <property type="term" value="C:cytosol"/>
    <property type="evidence" value="ECO:0007669"/>
    <property type="project" value="TreeGrafter"/>
</dbReference>
<dbReference type="GO" id="GO:0070012">
    <property type="term" value="F:oligopeptidase activity"/>
    <property type="evidence" value="ECO:0007669"/>
    <property type="project" value="TreeGrafter"/>
</dbReference>
<dbReference type="GO" id="GO:0004252">
    <property type="term" value="F:serine-type endopeptidase activity"/>
    <property type="evidence" value="ECO:0007669"/>
    <property type="project" value="UniProtKB-EC"/>
</dbReference>
<dbReference type="GO" id="GO:0006508">
    <property type="term" value="P:proteolysis"/>
    <property type="evidence" value="ECO:0007669"/>
    <property type="project" value="UniProtKB-KW"/>
</dbReference>
<dbReference type="FunFam" id="3.40.50.1820:FF:000005">
    <property type="entry name" value="Prolyl endopeptidase"/>
    <property type="match status" value="1"/>
</dbReference>
<dbReference type="Gene3D" id="3.40.50.1820">
    <property type="entry name" value="alpha/beta hydrolase"/>
    <property type="match status" value="1"/>
</dbReference>
<dbReference type="Gene3D" id="2.130.10.120">
    <property type="entry name" value="Prolyl oligopeptidase, N-terminal domain"/>
    <property type="match status" value="1"/>
</dbReference>
<dbReference type="InterPro" id="IPR029058">
    <property type="entry name" value="AB_hydrolase_fold"/>
</dbReference>
<dbReference type="InterPro" id="IPR002471">
    <property type="entry name" value="Pept_S9_AS"/>
</dbReference>
<dbReference type="InterPro" id="IPR023302">
    <property type="entry name" value="Pept_S9A_N"/>
</dbReference>
<dbReference type="InterPro" id="IPR001375">
    <property type="entry name" value="Peptidase_S9_cat"/>
</dbReference>
<dbReference type="InterPro" id="IPR002470">
    <property type="entry name" value="Peptidase_S9A"/>
</dbReference>
<dbReference type="InterPro" id="IPR051167">
    <property type="entry name" value="Prolyl_oligopep/macrocyclase"/>
</dbReference>
<dbReference type="PANTHER" id="PTHR42881">
    <property type="entry name" value="PROLYL ENDOPEPTIDASE"/>
    <property type="match status" value="1"/>
</dbReference>
<dbReference type="PANTHER" id="PTHR42881:SF2">
    <property type="entry name" value="PROLYL ENDOPEPTIDASE"/>
    <property type="match status" value="1"/>
</dbReference>
<dbReference type="Pfam" id="PF00326">
    <property type="entry name" value="Peptidase_S9"/>
    <property type="match status" value="1"/>
</dbReference>
<dbReference type="Pfam" id="PF02897">
    <property type="entry name" value="Peptidase_S9_N"/>
    <property type="match status" value="1"/>
</dbReference>
<dbReference type="PRINTS" id="PR00862">
    <property type="entry name" value="PROLIGOPTASE"/>
</dbReference>
<dbReference type="SUPFAM" id="SSF53474">
    <property type="entry name" value="alpha/beta-Hydrolases"/>
    <property type="match status" value="1"/>
</dbReference>
<dbReference type="SUPFAM" id="SSF50993">
    <property type="entry name" value="Peptidase/esterase 'gauge' domain"/>
    <property type="match status" value="1"/>
</dbReference>
<dbReference type="PROSITE" id="PS00708">
    <property type="entry name" value="PRO_ENDOPEP_SER"/>
    <property type="match status" value="1"/>
</dbReference>
<gene>
    <name evidence="3" type="primary">POPA</name>
    <name type="ORF">GALMADRAFT_70906</name>
</gene>
<feature type="chain" id="PRO_0000443715" description="Prolyl oligopeptidase A">
    <location>
        <begin position="1"/>
        <end position="738"/>
    </location>
</feature>
<feature type="active site" description="Charge relay system" evidence="2">
    <location>
        <position position="581"/>
    </location>
</feature>
<feature type="active site" description="Charge relay system" evidence="2">
    <location>
        <position position="665"/>
    </location>
</feature>
<feature type="active site" description="Charge relay system" evidence="2">
    <location>
        <position position="701"/>
    </location>
</feature>
<reference key="1">
    <citation type="journal article" date="2012" name="Fungal Genet. Biol.">
        <title>Ribosomal biosynthesis of alpha-amanitin in Galerina marginata.</title>
        <authorList>
            <person name="Luo H."/>
            <person name="Hallen-Adams H.E."/>
            <person name="Scott-Craig J.S."/>
            <person name="Walton J.D."/>
        </authorList>
    </citation>
    <scope>NUCLEOTIDE SEQUENCE [MRNA]</scope>
    <scope>FUNCTION</scope>
    <source>
        <strain>CBS 339.88</strain>
    </source>
</reference>
<reference key="2">
    <citation type="journal article" date="2014" name="Proc. Natl. Acad. Sci. U.S.A.">
        <title>Extensive sampling of basidiomycete genomes demonstrates inadequacy of the white-rot/brown-rot paradigm for wood decay fungi.</title>
        <authorList>
            <person name="Riley R."/>
            <person name="Salamov A.A."/>
            <person name="Brown D.W."/>
            <person name="Nagy L.G."/>
            <person name="Floudas D."/>
            <person name="Held B.W."/>
            <person name="Levasseur A."/>
            <person name="Lombard V."/>
            <person name="Morin E."/>
            <person name="Otillar R."/>
            <person name="Lindquist E.A."/>
            <person name="Sun H."/>
            <person name="LaButti K.M."/>
            <person name="Schmutz J."/>
            <person name="Jabbour D."/>
            <person name="Luo H."/>
            <person name="Baker S.E."/>
            <person name="Pisabarro A.G."/>
            <person name="Walton J.D."/>
            <person name="Blanchette R.A."/>
            <person name="Henrissat B."/>
            <person name="Martin F."/>
            <person name="Cullen D."/>
            <person name="Hibbett D.S."/>
            <person name="Grigoriev I.V."/>
        </authorList>
    </citation>
    <scope>NUCLEOTIDE SEQUENCE [LARGE SCALE GENOMIC DNA]</scope>
    <source>
        <strain>CBS 339.88</strain>
    </source>
</reference>
<comment type="function">
    <text evidence="5">Housekeeping prolyl oligopeptidase (POP) that behaves like a conventional POP by cleaving peptide bonds on the C-terminal side of prolyl residues within peptides that are up to approximately 30 amino acids long (PubMed:22202811).</text>
</comment>
<comment type="catalytic activity">
    <reaction evidence="4">
        <text>Hydrolysis of Pro-|-Xaa &gt;&gt; Ala-|-Xaa in oligopeptides.</text>
        <dbReference type="EC" id="3.4.21.26"/>
    </reaction>
</comment>
<comment type="subunit">
    <text evidence="1">Monomer.</text>
</comment>
<comment type="similarity">
    <text evidence="4">Belongs to the peptidase S9A family.</text>
</comment>
<name>POPA_GALM3</name>
<keyword id="KW-0378">Hydrolase</keyword>
<keyword id="KW-0645">Protease</keyword>
<keyword id="KW-1185">Reference proteome</keyword>
<keyword id="KW-0720">Serine protease</keyword>